<feature type="chain" id="PRO_1000166906" description="Large ribosomal subunit protein uL14">
    <location>
        <begin position="1"/>
        <end position="122"/>
    </location>
</feature>
<dbReference type="EMBL" id="CP001158">
    <property type="protein sequence ID" value="ACL30304.1"/>
    <property type="molecule type" value="Genomic_DNA"/>
</dbReference>
<dbReference type="RefSeq" id="WP_009874465.1">
    <property type="nucleotide sequence ID" value="NC_011834.1"/>
</dbReference>
<dbReference type="SMR" id="B8D839"/>
<dbReference type="KEGG" id="bau:BUAPTUC7_508"/>
<dbReference type="HOGENOM" id="CLU_095071_2_1_6"/>
<dbReference type="GO" id="GO:0022625">
    <property type="term" value="C:cytosolic large ribosomal subunit"/>
    <property type="evidence" value="ECO:0007669"/>
    <property type="project" value="TreeGrafter"/>
</dbReference>
<dbReference type="GO" id="GO:0070180">
    <property type="term" value="F:large ribosomal subunit rRNA binding"/>
    <property type="evidence" value="ECO:0007669"/>
    <property type="project" value="TreeGrafter"/>
</dbReference>
<dbReference type="GO" id="GO:0003735">
    <property type="term" value="F:structural constituent of ribosome"/>
    <property type="evidence" value="ECO:0007669"/>
    <property type="project" value="InterPro"/>
</dbReference>
<dbReference type="GO" id="GO:0006412">
    <property type="term" value="P:translation"/>
    <property type="evidence" value="ECO:0007669"/>
    <property type="project" value="UniProtKB-UniRule"/>
</dbReference>
<dbReference type="CDD" id="cd00337">
    <property type="entry name" value="Ribosomal_uL14"/>
    <property type="match status" value="1"/>
</dbReference>
<dbReference type="FunFam" id="2.40.150.20:FF:000001">
    <property type="entry name" value="50S ribosomal protein L14"/>
    <property type="match status" value="1"/>
</dbReference>
<dbReference type="Gene3D" id="2.40.150.20">
    <property type="entry name" value="Ribosomal protein L14"/>
    <property type="match status" value="1"/>
</dbReference>
<dbReference type="HAMAP" id="MF_01367">
    <property type="entry name" value="Ribosomal_uL14"/>
    <property type="match status" value="1"/>
</dbReference>
<dbReference type="InterPro" id="IPR000218">
    <property type="entry name" value="Ribosomal_uL14"/>
</dbReference>
<dbReference type="InterPro" id="IPR005745">
    <property type="entry name" value="Ribosomal_uL14_bac-type"/>
</dbReference>
<dbReference type="InterPro" id="IPR019972">
    <property type="entry name" value="Ribosomal_uL14_CS"/>
</dbReference>
<dbReference type="InterPro" id="IPR036853">
    <property type="entry name" value="Ribosomal_uL14_sf"/>
</dbReference>
<dbReference type="NCBIfam" id="TIGR01067">
    <property type="entry name" value="rplN_bact"/>
    <property type="match status" value="1"/>
</dbReference>
<dbReference type="PANTHER" id="PTHR11761">
    <property type="entry name" value="50S/60S RIBOSOMAL PROTEIN L14/L23"/>
    <property type="match status" value="1"/>
</dbReference>
<dbReference type="PANTHER" id="PTHR11761:SF3">
    <property type="entry name" value="LARGE RIBOSOMAL SUBUNIT PROTEIN UL14M"/>
    <property type="match status" value="1"/>
</dbReference>
<dbReference type="Pfam" id="PF00238">
    <property type="entry name" value="Ribosomal_L14"/>
    <property type="match status" value="1"/>
</dbReference>
<dbReference type="SMART" id="SM01374">
    <property type="entry name" value="Ribosomal_L14"/>
    <property type="match status" value="1"/>
</dbReference>
<dbReference type="SUPFAM" id="SSF50193">
    <property type="entry name" value="Ribosomal protein L14"/>
    <property type="match status" value="1"/>
</dbReference>
<dbReference type="PROSITE" id="PS00049">
    <property type="entry name" value="RIBOSOMAL_L14"/>
    <property type="match status" value="1"/>
</dbReference>
<keyword id="KW-0687">Ribonucleoprotein</keyword>
<keyword id="KW-0689">Ribosomal protein</keyword>
<keyword id="KW-0694">RNA-binding</keyword>
<keyword id="KW-0699">rRNA-binding</keyword>
<proteinExistence type="inferred from homology"/>
<gene>
    <name evidence="1" type="primary">rplN</name>
    <name type="ordered locus">BUAPTUC7_508</name>
</gene>
<comment type="function">
    <text evidence="1">Binds to 23S rRNA. Forms part of two intersubunit bridges in the 70S ribosome.</text>
</comment>
<comment type="subunit">
    <text evidence="1">Part of the 50S ribosomal subunit. Forms a cluster with proteins L3 and L19. In the 70S ribosome, L14 and L19 interact and together make contacts with the 16S rRNA in bridges B5 and B8.</text>
</comment>
<comment type="similarity">
    <text evidence="1">Belongs to the universal ribosomal protein uL14 family.</text>
</comment>
<reference key="1">
    <citation type="journal article" date="2009" name="Science">
        <title>The dynamics and time scale of ongoing genomic erosion in symbiotic bacteria.</title>
        <authorList>
            <person name="Moran N.A."/>
            <person name="McLaughlin H.J."/>
            <person name="Sorek R."/>
        </authorList>
    </citation>
    <scope>NUCLEOTIDE SEQUENCE [LARGE SCALE GENOMIC DNA]</scope>
    <source>
        <strain>Tuc7</strain>
    </source>
</reference>
<organism>
    <name type="scientific">Buchnera aphidicola subsp. Acyrthosiphon pisum (strain Tuc7)</name>
    <dbReference type="NCBI Taxonomy" id="561501"/>
    <lineage>
        <taxon>Bacteria</taxon>
        <taxon>Pseudomonadati</taxon>
        <taxon>Pseudomonadota</taxon>
        <taxon>Gammaproteobacteria</taxon>
        <taxon>Enterobacterales</taxon>
        <taxon>Erwiniaceae</taxon>
        <taxon>Buchnera</taxon>
    </lineage>
</organism>
<protein>
    <recommendedName>
        <fullName evidence="1">Large ribosomal subunit protein uL14</fullName>
    </recommendedName>
    <alternativeName>
        <fullName evidence="2">50S ribosomal protein L14</fullName>
    </alternativeName>
</protein>
<name>RL14_BUCAT</name>
<sequence>MIQEQTILHVADNSGARSAMCIKVLGGSRRRYAAIGDVIKITIKEAIPRGKVKKGEVLKAVVVRTKKGVRRSDGSVIRFDTNACVVLNNNEQPIGTRIFGPVTRELRTEKFMKIISLAPEVL</sequence>
<accession>B8D839</accession>
<evidence type="ECO:0000255" key="1">
    <source>
        <dbReference type="HAMAP-Rule" id="MF_01367"/>
    </source>
</evidence>
<evidence type="ECO:0000305" key="2"/>